<proteinExistence type="inferred from homology"/>
<name>ARNE_AERHH</name>
<gene>
    <name evidence="1" type="primary">arnE</name>
    <name type="ordered locus">AHA_0987</name>
</gene>
<sequence>MDILLLLLVCLLTCGGQMLQKQAVVSWQRRPCNHWQKLRSPWLIASVAALGCGMLLWIYLLQRLPLSMAYPMLSINLVLVLVGSRLFFHEQISYHNWLGVGAIIVGALLLGGLL</sequence>
<keyword id="KW-0997">Cell inner membrane</keyword>
<keyword id="KW-1003">Cell membrane</keyword>
<keyword id="KW-0441">Lipid A biosynthesis</keyword>
<keyword id="KW-0444">Lipid biosynthesis</keyword>
<keyword id="KW-0443">Lipid metabolism</keyword>
<keyword id="KW-0448">Lipopolysaccharide biosynthesis</keyword>
<keyword id="KW-0472">Membrane</keyword>
<keyword id="KW-1185">Reference proteome</keyword>
<keyword id="KW-0812">Transmembrane</keyword>
<keyword id="KW-1133">Transmembrane helix</keyword>
<keyword id="KW-0813">Transport</keyword>
<feature type="chain" id="PRO_0000382951" description="Probable 4-amino-4-deoxy-L-arabinose-phosphoundecaprenol flippase subunit ArnE">
    <location>
        <begin position="1"/>
        <end position="114"/>
    </location>
</feature>
<feature type="transmembrane region" description="Helical" evidence="1">
    <location>
        <begin position="41"/>
        <end position="61"/>
    </location>
</feature>
<feature type="transmembrane region" description="Helical" evidence="1">
    <location>
        <begin position="64"/>
        <end position="84"/>
    </location>
</feature>
<feature type="transmembrane region" description="Helical" evidence="1">
    <location>
        <begin position="94"/>
        <end position="114"/>
    </location>
</feature>
<feature type="domain" description="EamA" evidence="1">
    <location>
        <begin position="43"/>
        <end position="112"/>
    </location>
</feature>
<organism>
    <name type="scientific">Aeromonas hydrophila subsp. hydrophila (strain ATCC 7966 / DSM 30187 / BCRC 13018 / CCUG 14551 / JCM 1027 / KCTC 2358 / NCIMB 9240 / NCTC 8049)</name>
    <dbReference type="NCBI Taxonomy" id="380703"/>
    <lineage>
        <taxon>Bacteria</taxon>
        <taxon>Pseudomonadati</taxon>
        <taxon>Pseudomonadota</taxon>
        <taxon>Gammaproteobacteria</taxon>
        <taxon>Aeromonadales</taxon>
        <taxon>Aeromonadaceae</taxon>
        <taxon>Aeromonas</taxon>
    </lineage>
</organism>
<protein>
    <recommendedName>
        <fullName evidence="1">Probable 4-amino-4-deoxy-L-arabinose-phosphoundecaprenol flippase subunit ArnE</fullName>
        <shortName evidence="1">L-Ara4N-phosphoundecaprenol flippase subunit ArnE</shortName>
    </recommendedName>
    <alternativeName>
        <fullName evidence="1">Undecaprenyl phosphate-aminoarabinose flippase subunit ArnE</fullName>
    </alternativeName>
</protein>
<accession>A0KGY3</accession>
<reference key="1">
    <citation type="journal article" date="2006" name="J. Bacteriol.">
        <title>Genome sequence of Aeromonas hydrophila ATCC 7966T: jack of all trades.</title>
        <authorList>
            <person name="Seshadri R."/>
            <person name="Joseph S.W."/>
            <person name="Chopra A.K."/>
            <person name="Sha J."/>
            <person name="Shaw J."/>
            <person name="Graf J."/>
            <person name="Haft D.H."/>
            <person name="Wu M."/>
            <person name="Ren Q."/>
            <person name="Rosovitz M.J."/>
            <person name="Madupu R."/>
            <person name="Tallon L."/>
            <person name="Kim M."/>
            <person name="Jin S."/>
            <person name="Vuong H."/>
            <person name="Stine O.C."/>
            <person name="Ali A."/>
            <person name="Horneman A.J."/>
            <person name="Heidelberg J.F."/>
        </authorList>
    </citation>
    <scope>NUCLEOTIDE SEQUENCE [LARGE SCALE GENOMIC DNA]</scope>
    <source>
        <strain>ATCC 7966 / DSM 30187 / BCRC 13018 / CCUG 14551 / JCM 1027 / KCTC 2358 / NCIMB 9240 / NCTC 8049</strain>
    </source>
</reference>
<dbReference type="EMBL" id="CP000462">
    <property type="protein sequence ID" value="ABK37653.1"/>
    <property type="molecule type" value="Genomic_DNA"/>
</dbReference>
<dbReference type="RefSeq" id="WP_011704922.1">
    <property type="nucleotide sequence ID" value="NC_008570.1"/>
</dbReference>
<dbReference type="RefSeq" id="YP_855533.1">
    <property type="nucleotide sequence ID" value="NC_008570.1"/>
</dbReference>
<dbReference type="SMR" id="A0KGY3"/>
<dbReference type="STRING" id="380703.AHA_0987"/>
<dbReference type="EnsemblBacteria" id="ABK37653">
    <property type="protein sequence ID" value="ABK37653"/>
    <property type="gene ID" value="AHA_0987"/>
</dbReference>
<dbReference type="GeneID" id="4487528"/>
<dbReference type="KEGG" id="aha:AHA_0987"/>
<dbReference type="PATRIC" id="fig|380703.7.peg.991"/>
<dbReference type="eggNOG" id="COG2076">
    <property type="taxonomic scope" value="Bacteria"/>
</dbReference>
<dbReference type="HOGENOM" id="CLU_131462_5_1_6"/>
<dbReference type="OrthoDB" id="6058674at2"/>
<dbReference type="UniPathway" id="UPA00030"/>
<dbReference type="Proteomes" id="UP000000756">
    <property type="component" value="Chromosome"/>
</dbReference>
<dbReference type="GO" id="GO:0005886">
    <property type="term" value="C:plasma membrane"/>
    <property type="evidence" value="ECO:0007669"/>
    <property type="project" value="UniProtKB-SubCell"/>
</dbReference>
<dbReference type="GO" id="GO:1901505">
    <property type="term" value="F:carbohydrate derivative transmembrane transporter activity"/>
    <property type="evidence" value="ECO:0007669"/>
    <property type="project" value="InterPro"/>
</dbReference>
<dbReference type="GO" id="GO:0009245">
    <property type="term" value="P:lipid A biosynthetic process"/>
    <property type="evidence" value="ECO:0007669"/>
    <property type="project" value="UniProtKB-UniRule"/>
</dbReference>
<dbReference type="GO" id="GO:0009103">
    <property type="term" value="P:lipopolysaccharide biosynthetic process"/>
    <property type="evidence" value="ECO:0007669"/>
    <property type="project" value="UniProtKB-UniRule"/>
</dbReference>
<dbReference type="Gene3D" id="1.10.3730.20">
    <property type="match status" value="1"/>
</dbReference>
<dbReference type="HAMAP" id="MF_01869">
    <property type="entry name" value="Flippase_ArnE"/>
    <property type="match status" value="1"/>
</dbReference>
<dbReference type="InterPro" id="IPR000620">
    <property type="entry name" value="EamA_dom"/>
</dbReference>
<dbReference type="InterPro" id="IPR022883">
    <property type="entry name" value="Flippase_ArnE"/>
</dbReference>
<dbReference type="InterPro" id="IPR000390">
    <property type="entry name" value="Small_drug/metabolite_transptr"/>
</dbReference>
<dbReference type="PANTHER" id="PTHR30561:SF23">
    <property type="entry name" value="4-AMINO-4-DEOXY-L-ARABINOSE-PHOSPHOUNDECAPRENOL FLIPPASE SUBUNIT ARNE-RELATED"/>
    <property type="match status" value="1"/>
</dbReference>
<dbReference type="PANTHER" id="PTHR30561">
    <property type="entry name" value="SMR FAMILY PROTON-DEPENDENT DRUG EFFLUX TRANSPORTER SUGE"/>
    <property type="match status" value="1"/>
</dbReference>
<dbReference type="Pfam" id="PF00892">
    <property type="entry name" value="EamA"/>
    <property type="match status" value="1"/>
</dbReference>
<dbReference type="SUPFAM" id="SSF103481">
    <property type="entry name" value="Multidrug resistance efflux transporter EmrE"/>
    <property type="match status" value="1"/>
</dbReference>
<evidence type="ECO:0000255" key="1">
    <source>
        <dbReference type="HAMAP-Rule" id="MF_01869"/>
    </source>
</evidence>
<comment type="function">
    <text evidence="1">Translocates 4-amino-4-deoxy-L-arabinose-phosphoundecaprenol (alpha-L-Ara4N-phosphoundecaprenol) from the cytoplasmic to the periplasmic side of the inner membrane.</text>
</comment>
<comment type="pathway">
    <text evidence="1">Bacterial outer membrane biogenesis; lipopolysaccharide biosynthesis.</text>
</comment>
<comment type="subunit">
    <text evidence="1">Heterodimer of ArnE and ArnF.</text>
</comment>
<comment type="subcellular location">
    <subcellularLocation>
        <location evidence="1">Cell inner membrane</location>
        <topology evidence="1">Multi-pass membrane protein</topology>
    </subcellularLocation>
</comment>
<comment type="similarity">
    <text evidence="1">Belongs to the ArnE family.</text>
</comment>